<sequence>AWNRRSRSCGGVLRDPPGKIFNSDGPQKDCVWTIKVKPHFHVVIAIPPLNLSCGKEYVELLDGPPGSEIIGKICGGISLVFRSSSNIATIKYLRTSGQRASPFHIYYYADPEGPLPFPYFERQTIIATEKNIP</sequence>
<comment type="function">
    <text>Mediates the binding of spermatozoa to component(s) of the egg's zona pellucida by a carbohydrate-binding mechanism. It is a secretory component of the male accessory glands being coated to the sperm surface at the time of ejaculation.</text>
</comment>
<comment type="subcellular location">
    <subcellularLocation>
        <location>Secreted</location>
    </subcellularLocation>
    <text>Predominantly localized on the membrane overlying the acrosomal cap region of the sperm head.</text>
</comment>
<comment type="similarity">
    <text evidence="5">Belongs to the spermadhesin family.</text>
</comment>
<evidence type="ECO:0000250" key="1"/>
<evidence type="ECO:0000250" key="2">
    <source>
        <dbReference type="UniProtKB" id="P26776"/>
    </source>
</evidence>
<evidence type="ECO:0000255" key="3">
    <source>
        <dbReference type="PROSITE-ProRule" id="PRU00059"/>
    </source>
</evidence>
<evidence type="ECO:0000269" key="4">
    <source>
    </source>
</evidence>
<evidence type="ECO:0000305" key="5"/>
<proteinExistence type="evidence at protein level"/>
<keyword id="KW-0007">Acetylation</keyword>
<keyword id="KW-0903">Direct protein sequencing</keyword>
<keyword id="KW-1015">Disulfide bond</keyword>
<keyword id="KW-0278">Fertilization</keyword>
<keyword id="KW-1185">Reference proteome</keyword>
<keyword id="KW-0964">Secreted</keyword>
<dbReference type="SMR" id="P80720"/>
<dbReference type="InParanoid" id="P80720"/>
<dbReference type="Proteomes" id="UP000002281">
    <property type="component" value="Unplaced"/>
</dbReference>
<dbReference type="GO" id="GO:0005576">
    <property type="term" value="C:extracellular region"/>
    <property type="evidence" value="ECO:0007669"/>
    <property type="project" value="UniProtKB-SubCell"/>
</dbReference>
<dbReference type="GO" id="GO:0007338">
    <property type="term" value="P:single fertilization"/>
    <property type="evidence" value="ECO:0007669"/>
    <property type="project" value="UniProtKB-KW"/>
</dbReference>
<dbReference type="CDD" id="cd00041">
    <property type="entry name" value="CUB"/>
    <property type="match status" value="1"/>
</dbReference>
<dbReference type="Gene3D" id="2.60.120.290">
    <property type="entry name" value="Spermadhesin, CUB domain"/>
    <property type="match status" value="1"/>
</dbReference>
<dbReference type="InterPro" id="IPR000859">
    <property type="entry name" value="CUB_dom"/>
</dbReference>
<dbReference type="InterPro" id="IPR035914">
    <property type="entry name" value="Sperma_CUB_dom_sf"/>
</dbReference>
<dbReference type="InterPro" id="IPR000124">
    <property type="entry name" value="Spermadhesin"/>
</dbReference>
<dbReference type="Pfam" id="PF00431">
    <property type="entry name" value="CUB"/>
    <property type="match status" value="1"/>
</dbReference>
<dbReference type="SMART" id="SM00042">
    <property type="entry name" value="CUB"/>
    <property type="match status" value="1"/>
</dbReference>
<dbReference type="SUPFAM" id="SSF49854">
    <property type="entry name" value="Spermadhesin, CUB domain"/>
    <property type="match status" value="1"/>
</dbReference>
<dbReference type="PROSITE" id="PS01180">
    <property type="entry name" value="CUB"/>
    <property type="match status" value="1"/>
</dbReference>
<dbReference type="PROSITE" id="PS00985">
    <property type="entry name" value="SPERMADHESIN_1"/>
    <property type="match status" value="1"/>
</dbReference>
<dbReference type="PROSITE" id="PS00986">
    <property type="entry name" value="SPERMADHESIN_2"/>
    <property type="match status" value="1"/>
</dbReference>
<organism>
    <name type="scientific">Equus caballus</name>
    <name type="common">Horse</name>
    <dbReference type="NCBI Taxonomy" id="9796"/>
    <lineage>
        <taxon>Eukaryota</taxon>
        <taxon>Metazoa</taxon>
        <taxon>Chordata</taxon>
        <taxon>Craniata</taxon>
        <taxon>Vertebrata</taxon>
        <taxon>Euteleostomi</taxon>
        <taxon>Mammalia</taxon>
        <taxon>Eutheria</taxon>
        <taxon>Laurasiatheria</taxon>
        <taxon>Perissodactyla</taxon>
        <taxon>Equidae</taxon>
        <taxon>Equus</taxon>
    </lineage>
</organism>
<protein>
    <recommendedName>
        <fullName>Carbohydrate-binding protein AWN</fullName>
    </recommendedName>
    <alternativeName>
        <fullName>Seminal plasma protein HSP-7</fullName>
    </alternativeName>
    <alternativeName>
        <fullName>Spermadhesin AWN</fullName>
    </alternativeName>
    <alternativeName>
        <fullName>Zona pellucida-binding protein AWN</fullName>
    </alternativeName>
</protein>
<reference key="1">
    <citation type="journal article" date="1996" name="Eur. J. Biochem.">
        <title>Primary structure of stallion seminal plasma protein HSP-7, a zona-pellucida-binding protein of the spermadhesin family.</title>
        <authorList>
            <person name="Reinert M."/>
            <person name="Calvete J.J."/>
            <person name="Sanz L."/>
            <person name="Mann K."/>
            <person name="Toepfer-Petersen E."/>
        </authorList>
    </citation>
    <scope>PROTEIN SEQUENCE</scope>
    <scope>DISULFIDE BONDS</scope>
    <source>
        <tissue>Sperm</tissue>
    </source>
</reference>
<reference key="2">
    <citation type="journal article" date="1995" name="Biochem. J.">
        <title>Amino acid sequence of HSP-1, a major protein of stallion seminal plasma: effect of glycosylation on its heparin- and gelatin-binding capabilities.</title>
        <authorList>
            <person name="Calvete J.J."/>
            <person name="Mann K."/>
            <person name="Schaefer W."/>
            <person name="Sanz L."/>
            <person name="Reinert M."/>
            <person name="Nessau S."/>
            <person name="Raida M."/>
            <person name="Toepfer-Petersen E."/>
        </authorList>
    </citation>
    <scope>PROTEIN SEQUENCE OF 1-14</scope>
    <source>
        <tissue>Seminal plasma</tissue>
    </source>
</reference>
<name>AWN_HORSE</name>
<feature type="chain" id="PRO_0000221455" description="Carbohydrate-binding protein AWN">
    <location>
        <begin position="1"/>
        <end position="133"/>
    </location>
</feature>
<feature type="domain" description="CUB" evidence="3">
    <location>
        <begin position="9"/>
        <end position="110"/>
    </location>
</feature>
<feature type="region of interest" description="Heparin-binding" evidence="1">
    <location>
        <begin position="73"/>
        <end position="110"/>
    </location>
</feature>
<feature type="modified residue" description="N-acetylalanine" evidence="2">
    <location>
        <position position="1"/>
    </location>
</feature>
<feature type="disulfide bond" evidence="3 4">
    <location>
        <begin position="9"/>
        <end position="30"/>
    </location>
</feature>
<feature type="disulfide bond" evidence="3 4">
    <location>
        <begin position="53"/>
        <end position="74"/>
    </location>
</feature>
<accession>P80720</accession>
<accession>P80948</accession>